<gene>
    <name evidence="1" type="primary">tah18</name>
    <name type="ORF">AN2239</name>
</gene>
<keyword id="KW-0963">Cytoplasm</keyword>
<keyword id="KW-0274">FAD</keyword>
<keyword id="KW-0285">Flavoprotein</keyword>
<keyword id="KW-0288">FMN</keyword>
<keyword id="KW-0496">Mitochondrion</keyword>
<keyword id="KW-0521">NADP</keyword>
<keyword id="KW-0560">Oxidoreductase</keyword>
<keyword id="KW-1185">Reference proteome</keyword>
<dbReference type="EC" id="1.18.1.-" evidence="1"/>
<dbReference type="EMBL" id="AACD01000036">
    <property type="protein sequence ID" value="EAA63924.1"/>
    <property type="status" value="ALT_SEQ"/>
    <property type="molecule type" value="Genomic_DNA"/>
</dbReference>
<dbReference type="EMBL" id="BN001307">
    <property type="protein sequence ID" value="CBF86443.1"/>
    <property type="molecule type" value="Genomic_DNA"/>
</dbReference>
<dbReference type="RefSeq" id="XP_659843.1">
    <property type="nucleotide sequence ID" value="XM_654751.1"/>
</dbReference>
<dbReference type="SMR" id="Q5BB41"/>
<dbReference type="FunCoup" id="Q5BB41">
    <property type="interactions" value="723"/>
</dbReference>
<dbReference type="STRING" id="227321.Q5BB41"/>
<dbReference type="EnsemblFungi" id="CBF86443">
    <property type="protein sequence ID" value="CBF86443"/>
    <property type="gene ID" value="ANIA_10283"/>
</dbReference>
<dbReference type="VEuPathDB" id="FungiDB:AN10283"/>
<dbReference type="eggNOG" id="KOG1159">
    <property type="taxonomic scope" value="Eukaryota"/>
</dbReference>
<dbReference type="HOGENOM" id="CLU_001570_17_2_1"/>
<dbReference type="InParanoid" id="Q5BB41"/>
<dbReference type="OMA" id="DIMSIPR"/>
<dbReference type="OrthoDB" id="1856718at2759"/>
<dbReference type="Proteomes" id="UP000000560">
    <property type="component" value="Chromosome VII"/>
</dbReference>
<dbReference type="GO" id="GO:0005829">
    <property type="term" value="C:cytosol"/>
    <property type="evidence" value="ECO:0000318"/>
    <property type="project" value="GO_Central"/>
</dbReference>
<dbReference type="GO" id="GO:0097361">
    <property type="term" value="C:cytosolic [4Fe-4S] assembly targeting complex"/>
    <property type="evidence" value="ECO:0007669"/>
    <property type="project" value="EnsemblFungi"/>
</dbReference>
<dbReference type="GO" id="GO:0005739">
    <property type="term" value="C:mitochondrion"/>
    <property type="evidence" value="ECO:0007669"/>
    <property type="project" value="UniProtKB-SubCell"/>
</dbReference>
<dbReference type="GO" id="GO:0050660">
    <property type="term" value="F:flavin adenine dinucleotide binding"/>
    <property type="evidence" value="ECO:0000318"/>
    <property type="project" value="GO_Central"/>
</dbReference>
<dbReference type="GO" id="GO:0010181">
    <property type="term" value="F:FMN binding"/>
    <property type="evidence" value="ECO:0000318"/>
    <property type="project" value="GO_Central"/>
</dbReference>
<dbReference type="GO" id="GO:0050661">
    <property type="term" value="F:NADP binding"/>
    <property type="evidence" value="ECO:0007669"/>
    <property type="project" value="UniProtKB-UniRule"/>
</dbReference>
<dbReference type="GO" id="GO:0003958">
    <property type="term" value="F:NADPH-hemoprotein reductase activity"/>
    <property type="evidence" value="ECO:0007669"/>
    <property type="project" value="InterPro"/>
</dbReference>
<dbReference type="GO" id="GO:0016491">
    <property type="term" value="F:oxidoreductase activity"/>
    <property type="evidence" value="ECO:0000318"/>
    <property type="project" value="GO_Central"/>
</dbReference>
<dbReference type="GO" id="GO:0034599">
    <property type="term" value="P:cellular response to oxidative stress"/>
    <property type="evidence" value="ECO:0007669"/>
    <property type="project" value="EnsemblFungi"/>
</dbReference>
<dbReference type="GO" id="GO:0016226">
    <property type="term" value="P:iron-sulfur cluster assembly"/>
    <property type="evidence" value="ECO:0007669"/>
    <property type="project" value="UniProtKB-UniRule"/>
</dbReference>
<dbReference type="GO" id="GO:0006809">
    <property type="term" value="P:nitric oxide biosynthetic process"/>
    <property type="evidence" value="ECO:0007669"/>
    <property type="project" value="EnsemblFungi"/>
</dbReference>
<dbReference type="GO" id="GO:0045429">
    <property type="term" value="P:positive regulation of nitric oxide biosynthetic process"/>
    <property type="evidence" value="ECO:0007669"/>
    <property type="project" value="EnsemblFungi"/>
</dbReference>
<dbReference type="FunFam" id="1.20.990.10:FF:000013">
    <property type="entry name" value="NADPH-dependent diflavin oxidoreductase 1"/>
    <property type="match status" value="1"/>
</dbReference>
<dbReference type="FunFam" id="3.40.50.360:FF:000015">
    <property type="entry name" value="NADPH-dependent diflavin oxidoreductase 1"/>
    <property type="match status" value="1"/>
</dbReference>
<dbReference type="FunFam" id="3.40.50.80:FF:000030">
    <property type="entry name" value="NADPH-dependent diflavin oxidoreductase 1"/>
    <property type="match status" value="1"/>
</dbReference>
<dbReference type="Gene3D" id="3.40.50.360">
    <property type="match status" value="1"/>
</dbReference>
<dbReference type="Gene3D" id="1.20.990.10">
    <property type="entry name" value="NADPH-cytochrome p450 Reductase, Chain A, domain 3"/>
    <property type="match status" value="1"/>
</dbReference>
<dbReference type="Gene3D" id="3.40.50.80">
    <property type="entry name" value="Nucleotide-binding domain of ferredoxin-NADP reductase (FNR) module"/>
    <property type="match status" value="1"/>
</dbReference>
<dbReference type="Gene3D" id="2.40.30.10">
    <property type="entry name" value="Translation factors"/>
    <property type="match status" value="1"/>
</dbReference>
<dbReference type="HAMAP" id="MF_03178">
    <property type="entry name" value="NDOR1"/>
    <property type="match status" value="1"/>
</dbReference>
<dbReference type="InterPro" id="IPR003097">
    <property type="entry name" value="CysJ-like_FAD-binding"/>
</dbReference>
<dbReference type="InterPro" id="IPR017927">
    <property type="entry name" value="FAD-bd_FR_type"/>
</dbReference>
<dbReference type="InterPro" id="IPR001094">
    <property type="entry name" value="Flavdoxin-like"/>
</dbReference>
<dbReference type="InterPro" id="IPR008254">
    <property type="entry name" value="Flavodoxin/NO_synth"/>
</dbReference>
<dbReference type="InterPro" id="IPR001709">
    <property type="entry name" value="Flavoprot_Pyr_Nucl_cyt_Rdtase"/>
</dbReference>
<dbReference type="InterPro" id="IPR029039">
    <property type="entry name" value="Flavoprotein-like_sf"/>
</dbReference>
<dbReference type="InterPro" id="IPR039261">
    <property type="entry name" value="FNR_nucleotide-bd"/>
</dbReference>
<dbReference type="InterPro" id="IPR023173">
    <property type="entry name" value="NADPH_Cyt_P450_Rdtase_alpha"/>
</dbReference>
<dbReference type="InterPro" id="IPR028879">
    <property type="entry name" value="NDOR1"/>
</dbReference>
<dbReference type="InterPro" id="IPR001433">
    <property type="entry name" value="OxRdtase_FAD/NAD-bd"/>
</dbReference>
<dbReference type="InterPro" id="IPR017938">
    <property type="entry name" value="Riboflavin_synthase-like_b-brl"/>
</dbReference>
<dbReference type="PANTHER" id="PTHR19384:SF10">
    <property type="entry name" value="NADPH-DEPENDENT DIFLAVIN OXIDOREDUCTASE 1"/>
    <property type="match status" value="1"/>
</dbReference>
<dbReference type="PANTHER" id="PTHR19384">
    <property type="entry name" value="NITRIC OXIDE SYNTHASE-RELATED"/>
    <property type="match status" value="1"/>
</dbReference>
<dbReference type="Pfam" id="PF00667">
    <property type="entry name" value="FAD_binding_1"/>
    <property type="match status" value="1"/>
</dbReference>
<dbReference type="Pfam" id="PF00258">
    <property type="entry name" value="Flavodoxin_1"/>
    <property type="match status" value="1"/>
</dbReference>
<dbReference type="Pfam" id="PF00175">
    <property type="entry name" value="NAD_binding_1"/>
    <property type="match status" value="1"/>
</dbReference>
<dbReference type="PRINTS" id="PR00369">
    <property type="entry name" value="FLAVODOXIN"/>
</dbReference>
<dbReference type="PRINTS" id="PR00371">
    <property type="entry name" value="FPNCR"/>
</dbReference>
<dbReference type="SUPFAM" id="SSF52343">
    <property type="entry name" value="Ferredoxin reductase-like, C-terminal NADP-linked domain"/>
    <property type="match status" value="1"/>
</dbReference>
<dbReference type="SUPFAM" id="SSF52218">
    <property type="entry name" value="Flavoproteins"/>
    <property type="match status" value="1"/>
</dbReference>
<dbReference type="SUPFAM" id="SSF63380">
    <property type="entry name" value="Riboflavin synthase domain-like"/>
    <property type="match status" value="1"/>
</dbReference>
<dbReference type="PROSITE" id="PS51384">
    <property type="entry name" value="FAD_FR"/>
    <property type="match status" value="1"/>
</dbReference>
<dbReference type="PROSITE" id="PS50902">
    <property type="entry name" value="FLAVODOXIN_LIKE"/>
    <property type="match status" value="1"/>
</dbReference>
<accession>Q5BB41</accession>
<accession>C8VMT2</accession>
<evidence type="ECO:0000255" key="1">
    <source>
        <dbReference type="HAMAP-Rule" id="MF_03178"/>
    </source>
</evidence>
<evidence type="ECO:0000256" key="2">
    <source>
        <dbReference type="SAM" id="MobiDB-lite"/>
    </source>
</evidence>
<evidence type="ECO:0000305" key="3"/>
<organism>
    <name type="scientific">Emericella nidulans (strain FGSC A4 / ATCC 38163 / CBS 112.46 / NRRL 194 / M139)</name>
    <name type="common">Aspergillus nidulans</name>
    <dbReference type="NCBI Taxonomy" id="227321"/>
    <lineage>
        <taxon>Eukaryota</taxon>
        <taxon>Fungi</taxon>
        <taxon>Dikarya</taxon>
        <taxon>Ascomycota</taxon>
        <taxon>Pezizomycotina</taxon>
        <taxon>Eurotiomycetes</taxon>
        <taxon>Eurotiomycetidae</taxon>
        <taxon>Eurotiales</taxon>
        <taxon>Aspergillaceae</taxon>
        <taxon>Aspergillus</taxon>
        <taxon>Aspergillus subgen. Nidulantes</taxon>
    </lineage>
</organism>
<name>NDOR1_EMENI</name>
<protein>
    <recommendedName>
        <fullName evidence="1">NADPH-dependent diflavin oxidoreductase 1</fullName>
        <ecNumber evidence="1">1.18.1.-</ecNumber>
    </recommendedName>
    <alternativeName>
        <fullName evidence="1">NADPH-dependent FMN and FAD-containing oxidoreductase</fullName>
    </alternativeName>
</protein>
<sequence>MSGSQSSGSPGSPGPPGPPGRSALVVYGSETGNAQDVAEEVGALAERLHFTTQISELNHVKPESLRSYTIVVFAVSTTGQGDLPANARTFWRSLLLKKLPPTFLSGVRFTWFGLGDSSYPKFNWAARKLYKRLLQLGADEIYPGGEADHQHSSGLEGTFIPWLAGFRKHLLDKYPLPPGQDPIPDDVQLPPKWVLRLRDQEAASEDVSPPDAMGAAVTGDFPDSYRLDNDHRPLHDSLTATLVQNKRVTPQTHWQDVRHLILTVSDPISYAPGDVLTITPKNTAEDVQSLIEMMGWQEQADQLVSLVPRDSTRSTNELPSPPIHSLDSYPRLTLRELLINYLDIRAIPRRSFFAAIAHYTTYEMHKERLLEFTNPEYLDEFWDYTTRPRRSILEILHEFDTVKIPWQHATSTFPIIRARQFSIASGGELKRTSVGGARFELLIAIVKYRTVIKKIREGVCTKYISNLRPGSTLKIQLQRGGLNSSVGQLVGPTMLIGPGTGVAPLRSMLWEKAAIVKSYQEKNPGVDPPIEPTILVYGGRNRAADFFFEDEWQQLSDLIKLKVLTAFSRDQKQKVYVQDVIRENSSLVFNLLHDKGGAVFVCGSSGRMPQAVRETLTEAFQYGNDAGTQPFSRREAEDYLVGMEKTGRYKQETW</sequence>
<reference key="1">
    <citation type="journal article" date="2005" name="Nature">
        <title>Sequencing of Aspergillus nidulans and comparative analysis with A. fumigatus and A. oryzae.</title>
        <authorList>
            <person name="Galagan J.E."/>
            <person name="Calvo S.E."/>
            <person name="Cuomo C."/>
            <person name="Ma L.-J."/>
            <person name="Wortman J.R."/>
            <person name="Batzoglou S."/>
            <person name="Lee S.-I."/>
            <person name="Bastuerkmen M."/>
            <person name="Spevak C.C."/>
            <person name="Clutterbuck J."/>
            <person name="Kapitonov V."/>
            <person name="Jurka J."/>
            <person name="Scazzocchio C."/>
            <person name="Farman M.L."/>
            <person name="Butler J."/>
            <person name="Purcell S."/>
            <person name="Harris S."/>
            <person name="Braus G.H."/>
            <person name="Draht O."/>
            <person name="Busch S."/>
            <person name="D'Enfert C."/>
            <person name="Bouchier C."/>
            <person name="Goldman G.H."/>
            <person name="Bell-Pedersen D."/>
            <person name="Griffiths-Jones S."/>
            <person name="Doonan J.H."/>
            <person name="Yu J."/>
            <person name="Vienken K."/>
            <person name="Pain A."/>
            <person name="Freitag M."/>
            <person name="Selker E.U."/>
            <person name="Archer D.B."/>
            <person name="Penalva M.A."/>
            <person name="Oakley B.R."/>
            <person name="Momany M."/>
            <person name="Tanaka T."/>
            <person name="Kumagai T."/>
            <person name="Asai K."/>
            <person name="Machida M."/>
            <person name="Nierman W.C."/>
            <person name="Denning D.W."/>
            <person name="Caddick M.X."/>
            <person name="Hynes M."/>
            <person name="Paoletti M."/>
            <person name="Fischer R."/>
            <person name="Miller B.L."/>
            <person name="Dyer P.S."/>
            <person name="Sachs M.S."/>
            <person name="Osmani S.A."/>
            <person name="Birren B.W."/>
        </authorList>
    </citation>
    <scope>NUCLEOTIDE SEQUENCE [LARGE SCALE GENOMIC DNA]</scope>
    <source>
        <strain>FGSC A4 / ATCC 38163 / CBS 112.46 / NRRL 194 / M139</strain>
    </source>
</reference>
<reference key="2">
    <citation type="journal article" date="2009" name="Fungal Genet. Biol.">
        <title>The 2008 update of the Aspergillus nidulans genome annotation: a community effort.</title>
        <authorList>
            <person name="Wortman J.R."/>
            <person name="Gilsenan J.M."/>
            <person name="Joardar V."/>
            <person name="Deegan J."/>
            <person name="Clutterbuck J."/>
            <person name="Andersen M.R."/>
            <person name="Archer D."/>
            <person name="Bencina M."/>
            <person name="Braus G."/>
            <person name="Coutinho P."/>
            <person name="von Dohren H."/>
            <person name="Doonan J."/>
            <person name="Driessen A.J."/>
            <person name="Durek P."/>
            <person name="Espeso E."/>
            <person name="Fekete E."/>
            <person name="Flipphi M."/>
            <person name="Estrada C.G."/>
            <person name="Geysens S."/>
            <person name="Goldman G."/>
            <person name="de Groot P.W."/>
            <person name="Hansen K."/>
            <person name="Harris S.D."/>
            <person name="Heinekamp T."/>
            <person name="Helmstaedt K."/>
            <person name="Henrissat B."/>
            <person name="Hofmann G."/>
            <person name="Homan T."/>
            <person name="Horio T."/>
            <person name="Horiuchi H."/>
            <person name="James S."/>
            <person name="Jones M."/>
            <person name="Karaffa L."/>
            <person name="Karanyi Z."/>
            <person name="Kato M."/>
            <person name="Keller N."/>
            <person name="Kelly D.E."/>
            <person name="Kiel J.A."/>
            <person name="Kim J.M."/>
            <person name="van der Klei I.J."/>
            <person name="Klis F.M."/>
            <person name="Kovalchuk A."/>
            <person name="Krasevec N."/>
            <person name="Kubicek C.P."/>
            <person name="Liu B."/>
            <person name="Maccabe A."/>
            <person name="Meyer V."/>
            <person name="Mirabito P."/>
            <person name="Miskei M."/>
            <person name="Mos M."/>
            <person name="Mullins J."/>
            <person name="Nelson D.R."/>
            <person name="Nielsen J."/>
            <person name="Oakley B.R."/>
            <person name="Osmani S.A."/>
            <person name="Pakula T."/>
            <person name="Paszewski A."/>
            <person name="Paulsen I."/>
            <person name="Pilsyk S."/>
            <person name="Pocsi I."/>
            <person name="Punt P.J."/>
            <person name="Ram A.F."/>
            <person name="Ren Q."/>
            <person name="Robellet X."/>
            <person name="Robson G."/>
            <person name="Seiboth B."/>
            <person name="van Solingen P."/>
            <person name="Specht T."/>
            <person name="Sun J."/>
            <person name="Taheri-Talesh N."/>
            <person name="Takeshita N."/>
            <person name="Ussery D."/>
            <person name="vanKuyk P.A."/>
            <person name="Visser H."/>
            <person name="van de Vondervoort P.J."/>
            <person name="de Vries R.P."/>
            <person name="Walton J."/>
            <person name="Xiang X."/>
            <person name="Xiong Y."/>
            <person name="Zeng A.P."/>
            <person name="Brandt B.W."/>
            <person name="Cornell M.J."/>
            <person name="van den Hondel C.A."/>
            <person name="Visser J."/>
            <person name="Oliver S.G."/>
            <person name="Turner G."/>
        </authorList>
    </citation>
    <scope>GENOME REANNOTATION</scope>
    <source>
        <strain>FGSC A4 / ATCC 38163 / CBS 112.46 / NRRL 194 / M139</strain>
    </source>
</reference>
<feature type="chain" id="PRO_0000167618" description="NADPH-dependent diflavin oxidoreductase 1">
    <location>
        <begin position="1"/>
        <end position="654"/>
    </location>
</feature>
<feature type="domain" description="Flavodoxin-like" evidence="1">
    <location>
        <begin position="23"/>
        <end position="167"/>
    </location>
</feature>
<feature type="domain" description="FAD-binding FR-type" evidence="1">
    <location>
        <begin position="235"/>
        <end position="485"/>
    </location>
</feature>
<feature type="region of interest" description="Disordered" evidence="2">
    <location>
        <begin position="1"/>
        <end position="22"/>
    </location>
</feature>
<feature type="compositionally biased region" description="Low complexity" evidence="2">
    <location>
        <begin position="1"/>
        <end position="10"/>
    </location>
</feature>
<feature type="binding site" evidence="1">
    <location>
        <begin position="29"/>
        <end position="34"/>
    </location>
    <ligand>
        <name>FMN</name>
        <dbReference type="ChEBI" id="CHEBI:58210"/>
    </ligand>
</feature>
<feature type="binding site" evidence="1">
    <location>
        <begin position="76"/>
        <end position="79"/>
    </location>
    <ligand>
        <name>FMN</name>
        <dbReference type="ChEBI" id="CHEBI:58210"/>
    </ligand>
</feature>
<feature type="binding site" evidence="1">
    <location>
        <begin position="114"/>
        <end position="123"/>
    </location>
    <ligand>
        <name>FMN</name>
        <dbReference type="ChEBI" id="CHEBI:58210"/>
    </ligand>
</feature>
<feature type="binding site" evidence="1">
    <location>
        <position position="389"/>
    </location>
    <ligand>
        <name>FAD</name>
        <dbReference type="ChEBI" id="CHEBI:57692"/>
    </ligand>
</feature>
<feature type="binding site" evidence="1">
    <location>
        <begin position="419"/>
        <end position="422"/>
    </location>
    <ligand>
        <name>FAD</name>
        <dbReference type="ChEBI" id="CHEBI:57692"/>
    </ligand>
</feature>
<feature type="binding site" evidence="1">
    <location>
        <begin position="458"/>
        <end position="461"/>
    </location>
    <ligand>
        <name>FAD</name>
        <dbReference type="ChEBI" id="CHEBI:57692"/>
    </ligand>
</feature>
<feature type="binding site" evidence="1">
    <location>
        <position position="500"/>
    </location>
    <ligand>
        <name>NADP(+)</name>
        <dbReference type="ChEBI" id="CHEBI:58349"/>
    </ligand>
</feature>
<feature type="binding site" evidence="1">
    <location>
        <begin position="568"/>
        <end position="569"/>
    </location>
    <ligand>
        <name>NADP(+)</name>
        <dbReference type="ChEBI" id="CHEBI:58349"/>
    </ligand>
</feature>
<feature type="binding site" evidence="1">
    <location>
        <begin position="574"/>
        <end position="578"/>
    </location>
    <ligand>
        <name>NADP(+)</name>
        <dbReference type="ChEBI" id="CHEBI:58349"/>
    </ligand>
</feature>
<feature type="binding site" evidence="1">
    <location>
        <position position="654"/>
    </location>
    <ligand>
        <name>FAD</name>
        <dbReference type="ChEBI" id="CHEBI:57692"/>
    </ligand>
</feature>
<proteinExistence type="inferred from homology"/>
<comment type="function">
    <text evidence="1">NADPH-dependent reductase which is a central component of the cytosolic iron-sulfur (Fe-S) protein assembly (CIA) machinery. Transfers electrons from NADPH via its FAD and FMN prosthetic groups to the [2Fe-2S] cluster of dre2, another key component of the CIA machinery. In turn, this reduced cluster provides electrons for assembly of cytosolic iron-sulfur cluster proteins. Positively controls H(2)O(2)-induced cell death.</text>
</comment>
<comment type="catalytic activity">
    <reaction evidence="1">
        <text>2 oxidized [2Fe-2S]-[protein] + NADPH = 2 reduced [2Fe-2S]-[protein] + NADP(+) + H(+)</text>
        <dbReference type="Rhea" id="RHEA:67716"/>
        <dbReference type="Rhea" id="RHEA-COMP:17327"/>
        <dbReference type="Rhea" id="RHEA-COMP:17328"/>
        <dbReference type="ChEBI" id="CHEBI:15378"/>
        <dbReference type="ChEBI" id="CHEBI:33737"/>
        <dbReference type="ChEBI" id="CHEBI:33738"/>
        <dbReference type="ChEBI" id="CHEBI:57783"/>
        <dbReference type="ChEBI" id="CHEBI:58349"/>
    </reaction>
    <physiologicalReaction direction="left-to-right" evidence="1">
        <dbReference type="Rhea" id="RHEA:67717"/>
    </physiologicalReaction>
</comment>
<comment type="cofactor">
    <cofactor evidence="1">
        <name>FAD</name>
        <dbReference type="ChEBI" id="CHEBI:57692"/>
    </cofactor>
</comment>
<comment type="cofactor">
    <cofactor evidence="1">
        <name>FMN</name>
        <dbReference type="ChEBI" id="CHEBI:58210"/>
    </cofactor>
</comment>
<comment type="subunit">
    <text evidence="1">Interacts with dre2; as part of the cytosolic iron-sulfur (Fe-S) protein assembly (CIA) machinery.</text>
</comment>
<comment type="subcellular location">
    <subcellularLocation>
        <location evidence="1">Cytoplasm</location>
    </subcellularLocation>
    <subcellularLocation>
        <location evidence="1">Mitochondrion</location>
    </subcellularLocation>
    <text evidence="1">Relocalizes to mitochondria after H(2)O(2) exposure.</text>
</comment>
<comment type="similarity">
    <text evidence="1">Belongs to the NADPH-dependent diflavin oxidoreductase NDOR1 family.</text>
</comment>
<comment type="similarity">
    <text evidence="1">In the N-terminal section; belongs to the flavodoxin family.</text>
</comment>
<comment type="similarity">
    <text evidence="1">In the C-terminal section; belongs to the flavoprotein pyridine nucleotide cytochrome reductase family.</text>
</comment>
<comment type="sequence caution" evidence="3">
    <conflict type="erroneous gene model prediction">
        <sequence resource="EMBL-CDS" id="EAA63924"/>
    </conflict>
</comment>